<proteinExistence type="evidence at transcript level"/>
<reference key="1">
    <citation type="journal article" date="2000" name="Gene">
        <title>Characterization of a cDNA clone, encoding a 70 kDa heat shock protein from the dermatophyte pathogen Trichophyton rubrum.</title>
        <authorList>
            <person name="Rezaie S."/>
            <person name="Ban J."/>
            <person name="Mildner M."/>
            <person name="Poitschek C."/>
            <person name="Brna C."/>
            <person name="Tschachler E."/>
        </authorList>
    </citation>
    <scope>NUCLEOTIDE SEQUENCE [MRNA]</scope>
</reference>
<sequence length="654" mass="70734">MAPAVGIDLGTTYSCVGIFRDDRIEIIANDQGNRTTPSFVAFTDTERLIGDAAKNQVAMNPINTVFDAKRLIGRKFNDAEVQADMKHFPFKVVEKSGKPIVQVEFKGEEKQFTPEEISSMVLTKMRETAEAYLGGTVNNAVITVPAYFNDSQRQATKDAGLIAGLNVLRIINEPTAGGIAYGLDKKADGERNVLIFDFGGGTFDVSLLTIEEGIFEVKSTAGDTQLGGEEFDNRLVNHFVNEFKRKNKKDLSTNARALRRLRTACERAKRTLSSAAQTSIEIDSLYEGVDFYTSITRARFEELCQDLFRSTMEPVERVLRDAKIDKSSVHEIVLVGGSTRIPKIQKMVSDFFNGKEPNKSINPDEGVAYGAAVQAAILSGDTSSKSTNEILLLDVAPLSLGIETAGGVMTPLIKRNTTIPTKKSETFSTFSDNQPGVLIQVFEGERARTKDNNLLGKFELTGIPPAPRGVPQIEVTFDVDANGIMNVSALEKGTGKTNKIVITNDKGRLSKEEIERMLAEAEKYKAEDEAETARIGAKNGLESYAYSLKNTLSDSKVDEKLDAADKEKLKSEIDKVVAWLDDNQTATKEEYESQQKELEGVANPIMMKFYGAGGEGGAPGGFPGAGAGGPGGFPGAGAGGAAAHDDGPTVEEVD</sequence>
<gene>
    <name type="primary">HSP70</name>
</gene>
<name>HSP70_TRIRU</name>
<accession>O93866</accession>
<organism>
    <name type="scientific">Trichophyton rubrum</name>
    <name type="common">Athlete's foot fungus</name>
    <name type="synonym">Epidermophyton rubrum</name>
    <dbReference type="NCBI Taxonomy" id="5551"/>
    <lineage>
        <taxon>Eukaryota</taxon>
        <taxon>Fungi</taxon>
        <taxon>Dikarya</taxon>
        <taxon>Ascomycota</taxon>
        <taxon>Pezizomycotina</taxon>
        <taxon>Eurotiomycetes</taxon>
        <taxon>Eurotiomycetidae</taxon>
        <taxon>Onygenales</taxon>
        <taxon>Arthrodermataceae</taxon>
        <taxon>Trichophyton</taxon>
    </lineage>
</organism>
<keyword id="KW-0067">ATP-binding</keyword>
<keyword id="KW-0143">Chaperone</keyword>
<keyword id="KW-0547">Nucleotide-binding</keyword>
<keyword id="KW-0346">Stress response</keyword>
<protein>
    <recommendedName>
        <fullName>Heat shock 70 kDa protein</fullName>
    </recommendedName>
</protein>
<comment type="similarity">
    <text evidence="2">Belongs to the heat shock protein 70 family.</text>
</comment>
<dbReference type="EMBL" id="AF052391">
    <property type="protein sequence ID" value="AAD08909.1"/>
    <property type="molecule type" value="mRNA"/>
</dbReference>
<dbReference type="SMR" id="O93866"/>
<dbReference type="VEuPathDB" id="FungiDB:TERG_06505"/>
<dbReference type="GO" id="GO:0005524">
    <property type="term" value="F:ATP binding"/>
    <property type="evidence" value="ECO:0007669"/>
    <property type="project" value="UniProtKB-KW"/>
</dbReference>
<dbReference type="GO" id="GO:0140662">
    <property type="term" value="F:ATP-dependent protein folding chaperone"/>
    <property type="evidence" value="ECO:0007669"/>
    <property type="project" value="InterPro"/>
</dbReference>
<dbReference type="CDD" id="cd10233">
    <property type="entry name" value="ASKHA_NBD_HSP70_HSPA1"/>
    <property type="match status" value="1"/>
</dbReference>
<dbReference type="FunFam" id="2.60.34.10:FF:000002">
    <property type="entry name" value="Heat shock 70 kDa"/>
    <property type="match status" value="1"/>
</dbReference>
<dbReference type="FunFam" id="3.30.420.40:FF:000172">
    <property type="entry name" value="Heat shock 70 kDa protein"/>
    <property type="match status" value="1"/>
</dbReference>
<dbReference type="FunFam" id="3.90.640.10:FF:000058">
    <property type="entry name" value="Heat shock 70 kDa protein"/>
    <property type="match status" value="1"/>
</dbReference>
<dbReference type="FunFam" id="3.30.30.30:FF:000001">
    <property type="entry name" value="heat shock 70 kDa protein-like"/>
    <property type="match status" value="1"/>
</dbReference>
<dbReference type="FunFam" id="1.20.1270.10:FF:000021">
    <property type="entry name" value="Heat shock protein 70"/>
    <property type="match status" value="1"/>
</dbReference>
<dbReference type="FunFam" id="3.30.420.40:FF:000026">
    <property type="entry name" value="Heat shock protein 70"/>
    <property type="match status" value="1"/>
</dbReference>
<dbReference type="Gene3D" id="1.20.1270.10">
    <property type="match status" value="1"/>
</dbReference>
<dbReference type="Gene3D" id="3.30.30.30">
    <property type="match status" value="1"/>
</dbReference>
<dbReference type="Gene3D" id="3.30.420.40">
    <property type="match status" value="2"/>
</dbReference>
<dbReference type="Gene3D" id="3.90.640.10">
    <property type="entry name" value="Actin, Chain A, domain 4"/>
    <property type="match status" value="1"/>
</dbReference>
<dbReference type="Gene3D" id="2.60.34.10">
    <property type="entry name" value="Substrate Binding Domain Of DNAk, Chain A, domain 1"/>
    <property type="match status" value="1"/>
</dbReference>
<dbReference type="InterPro" id="IPR043129">
    <property type="entry name" value="ATPase_NBD"/>
</dbReference>
<dbReference type="InterPro" id="IPR018181">
    <property type="entry name" value="Heat_shock_70_CS"/>
</dbReference>
<dbReference type="InterPro" id="IPR029048">
    <property type="entry name" value="HSP70_C_sf"/>
</dbReference>
<dbReference type="InterPro" id="IPR029047">
    <property type="entry name" value="HSP70_peptide-bd_sf"/>
</dbReference>
<dbReference type="InterPro" id="IPR013126">
    <property type="entry name" value="Hsp_70_fam"/>
</dbReference>
<dbReference type="NCBIfam" id="NF001413">
    <property type="entry name" value="PRK00290.1"/>
    <property type="match status" value="1"/>
</dbReference>
<dbReference type="PANTHER" id="PTHR19375">
    <property type="entry name" value="HEAT SHOCK PROTEIN 70KDA"/>
    <property type="match status" value="1"/>
</dbReference>
<dbReference type="Pfam" id="PF00012">
    <property type="entry name" value="HSP70"/>
    <property type="match status" value="1"/>
</dbReference>
<dbReference type="PRINTS" id="PR00301">
    <property type="entry name" value="HEATSHOCK70"/>
</dbReference>
<dbReference type="SUPFAM" id="SSF53067">
    <property type="entry name" value="Actin-like ATPase domain"/>
    <property type="match status" value="2"/>
</dbReference>
<dbReference type="SUPFAM" id="SSF100934">
    <property type="entry name" value="Heat shock protein 70kD (HSP70), C-terminal subdomain"/>
    <property type="match status" value="1"/>
</dbReference>
<dbReference type="SUPFAM" id="SSF100920">
    <property type="entry name" value="Heat shock protein 70kD (HSP70), peptide-binding domain"/>
    <property type="match status" value="1"/>
</dbReference>
<dbReference type="PROSITE" id="PS00297">
    <property type="entry name" value="HSP70_1"/>
    <property type="match status" value="1"/>
</dbReference>
<dbReference type="PROSITE" id="PS00329">
    <property type="entry name" value="HSP70_2"/>
    <property type="match status" value="1"/>
</dbReference>
<dbReference type="PROSITE" id="PS01036">
    <property type="entry name" value="HSP70_3"/>
    <property type="match status" value="1"/>
</dbReference>
<feature type="chain" id="PRO_0000078383" description="Heat shock 70 kDa protein">
    <location>
        <begin position="1"/>
        <end position="654"/>
    </location>
</feature>
<feature type="region of interest" description="Disordered" evidence="1">
    <location>
        <begin position="614"/>
        <end position="654"/>
    </location>
</feature>
<feature type="compositionally biased region" description="Gly residues" evidence="1">
    <location>
        <begin position="614"/>
        <end position="640"/>
    </location>
</feature>
<evidence type="ECO:0000256" key="1">
    <source>
        <dbReference type="SAM" id="MobiDB-lite"/>
    </source>
</evidence>
<evidence type="ECO:0000305" key="2"/>